<comment type="function">
    <text evidence="1">F(1)F(0) ATP synthase produces ATP from ADP in the presence of a proton or sodium gradient. F-type ATPases consist of two structural domains, F(1) containing the extramembraneous catalytic core and F(0) containing the membrane proton channel, linked together by a central stalk and a peripheral stalk. During catalysis, ATP synthesis in the catalytic domain of F(1) is coupled via a rotary mechanism of the central stalk subunits to proton translocation.</text>
</comment>
<comment type="function">
    <text evidence="1">Key component of the F(0) channel; it plays a direct role in translocation across the membrane. A homomeric c-ring of between 10-14 subunits forms the central stalk rotor element with the F(1) delta and epsilon subunits.</text>
</comment>
<comment type="subunit">
    <text evidence="1">F-type ATPases have 2 components, F(1) - the catalytic core - and F(0) - the membrane proton channel. F(1) has five subunits: alpha(3), beta(3), gamma(1), delta(1), epsilon(1). F(0) has three main subunits: a(1), b(2) and c(10-14). The alpha and beta chains form an alternating ring which encloses part of the gamma chain. F(1) is attached to F(0) by a central stalk formed by the gamma and epsilon chains, while a peripheral stalk is formed by the delta and b chains.</text>
</comment>
<comment type="subcellular location">
    <subcellularLocation>
        <location evidence="1">Cell inner membrane</location>
        <topology evidence="1">Multi-pass membrane protein</topology>
    </subcellularLocation>
</comment>
<comment type="similarity">
    <text evidence="1">Belongs to the ATPase C chain family.</text>
</comment>
<name>ATPL_YERPA</name>
<evidence type="ECO:0000255" key="1">
    <source>
        <dbReference type="HAMAP-Rule" id="MF_01396"/>
    </source>
</evidence>
<keyword id="KW-0066">ATP synthesis</keyword>
<keyword id="KW-0997">Cell inner membrane</keyword>
<keyword id="KW-1003">Cell membrane</keyword>
<keyword id="KW-0138">CF(0)</keyword>
<keyword id="KW-0375">Hydrogen ion transport</keyword>
<keyword id="KW-0406">Ion transport</keyword>
<keyword id="KW-0446">Lipid-binding</keyword>
<keyword id="KW-0472">Membrane</keyword>
<keyword id="KW-0812">Transmembrane</keyword>
<keyword id="KW-1133">Transmembrane helix</keyword>
<keyword id="KW-0813">Transport</keyword>
<dbReference type="EMBL" id="CP000308">
    <property type="protein sequence ID" value="ABG16132.1"/>
    <property type="molecule type" value="Genomic_DNA"/>
</dbReference>
<dbReference type="RefSeq" id="WP_000429386.1">
    <property type="nucleotide sequence ID" value="NZ_CP009906.1"/>
</dbReference>
<dbReference type="SMR" id="Q1C090"/>
<dbReference type="GeneID" id="98390858"/>
<dbReference type="KEGG" id="ypa:YPA_4171"/>
<dbReference type="Proteomes" id="UP000001971">
    <property type="component" value="Chromosome"/>
</dbReference>
<dbReference type="GO" id="GO:0005886">
    <property type="term" value="C:plasma membrane"/>
    <property type="evidence" value="ECO:0007669"/>
    <property type="project" value="UniProtKB-SubCell"/>
</dbReference>
<dbReference type="GO" id="GO:0045259">
    <property type="term" value="C:proton-transporting ATP synthase complex"/>
    <property type="evidence" value="ECO:0007669"/>
    <property type="project" value="UniProtKB-KW"/>
</dbReference>
<dbReference type="GO" id="GO:0033177">
    <property type="term" value="C:proton-transporting two-sector ATPase complex, proton-transporting domain"/>
    <property type="evidence" value="ECO:0007669"/>
    <property type="project" value="InterPro"/>
</dbReference>
<dbReference type="GO" id="GO:0008289">
    <property type="term" value="F:lipid binding"/>
    <property type="evidence" value="ECO:0007669"/>
    <property type="project" value="UniProtKB-KW"/>
</dbReference>
<dbReference type="GO" id="GO:0046933">
    <property type="term" value="F:proton-transporting ATP synthase activity, rotational mechanism"/>
    <property type="evidence" value="ECO:0007669"/>
    <property type="project" value="UniProtKB-UniRule"/>
</dbReference>
<dbReference type="CDD" id="cd18185">
    <property type="entry name" value="ATP-synt_Fo_c_ATPE"/>
    <property type="match status" value="1"/>
</dbReference>
<dbReference type="FunFam" id="1.20.20.10:FF:000002">
    <property type="entry name" value="ATP synthase subunit c"/>
    <property type="match status" value="1"/>
</dbReference>
<dbReference type="Gene3D" id="1.20.20.10">
    <property type="entry name" value="F1F0 ATP synthase subunit C"/>
    <property type="match status" value="1"/>
</dbReference>
<dbReference type="HAMAP" id="MF_01396">
    <property type="entry name" value="ATP_synth_c_bact"/>
    <property type="match status" value="1"/>
</dbReference>
<dbReference type="InterPro" id="IPR005953">
    <property type="entry name" value="ATP_synth_csu_bac/chlpt"/>
</dbReference>
<dbReference type="InterPro" id="IPR000454">
    <property type="entry name" value="ATP_synth_F0_csu"/>
</dbReference>
<dbReference type="InterPro" id="IPR020537">
    <property type="entry name" value="ATP_synth_F0_csu_DDCD_BS"/>
</dbReference>
<dbReference type="InterPro" id="IPR038662">
    <property type="entry name" value="ATP_synth_F0_csu_sf"/>
</dbReference>
<dbReference type="InterPro" id="IPR002379">
    <property type="entry name" value="ATPase_proteolipid_c-like_dom"/>
</dbReference>
<dbReference type="InterPro" id="IPR035921">
    <property type="entry name" value="F/V-ATP_Csub_sf"/>
</dbReference>
<dbReference type="NCBIfam" id="TIGR01260">
    <property type="entry name" value="ATP_synt_c"/>
    <property type="match status" value="1"/>
</dbReference>
<dbReference type="NCBIfam" id="NF005363">
    <property type="entry name" value="PRK06876.1"/>
    <property type="match status" value="1"/>
</dbReference>
<dbReference type="Pfam" id="PF00137">
    <property type="entry name" value="ATP-synt_C"/>
    <property type="match status" value="1"/>
</dbReference>
<dbReference type="PRINTS" id="PR00124">
    <property type="entry name" value="ATPASEC"/>
</dbReference>
<dbReference type="SUPFAM" id="SSF81333">
    <property type="entry name" value="F1F0 ATP synthase subunit C"/>
    <property type="match status" value="1"/>
</dbReference>
<dbReference type="PROSITE" id="PS00605">
    <property type="entry name" value="ATPASE_C"/>
    <property type="match status" value="1"/>
</dbReference>
<gene>
    <name evidence="1" type="primary">atpE</name>
    <name type="ordered locus">YPA_4171</name>
</gene>
<proteinExistence type="inferred from homology"/>
<sequence length="79" mass="8256">MENLNMDLLYMAAAVMMGLAAIGAAIGIGILGGKFLEGAARQPDLIPLLRTQFFIVMGLVDAIPMIAVGLGLYVMFAVA</sequence>
<reference key="1">
    <citation type="journal article" date="2006" name="J. Bacteriol.">
        <title>Complete genome sequence of Yersinia pestis strains Antiqua and Nepal516: evidence of gene reduction in an emerging pathogen.</title>
        <authorList>
            <person name="Chain P.S.G."/>
            <person name="Hu P."/>
            <person name="Malfatti S.A."/>
            <person name="Radnedge L."/>
            <person name="Larimer F."/>
            <person name="Vergez L.M."/>
            <person name="Worsham P."/>
            <person name="Chu M.C."/>
            <person name="Andersen G.L."/>
        </authorList>
    </citation>
    <scope>NUCLEOTIDE SEQUENCE [LARGE SCALE GENOMIC DNA]</scope>
    <source>
        <strain>Antiqua</strain>
    </source>
</reference>
<feature type="chain" id="PRO_1000184540" description="ATP synthase subunit c">
    <location>
        <begin position="1"/>
        <end position="79"/>
    </location>
</feature>
<feature type="transmembrane region" description="Helical" evidence="1">
    <location>
        <begin position="11"/>
        <end position="31"/>
    </location>
</feature>
<feature type="transmembrane region" description="Helical" evidence="1">
    <location>
        <begin position="53"/>
        <end position="73"/>
    </location>
</feature>
<feature type="site" description="Reversibly protonated during proton transport" evidence="1">
    <location>
        <position position="61"/>
    </location>
</feature>
<organism>
    <name type="scientific">Yersinia pestis bv. Antiqua (strain Antiqua)</name>
    <dbReference type="NCBI Taxonomy" id="360102"/>
    <lineage>
        <taxon>Bacteria</taxon>
        <taxon>Pseudomonadati</taxon>
        <taxon>Pseudomonadota</taxon>
        <taxon>Gammaproteobacteria</taxon>
        <taxon>Enterobacterales</taxon>
        <taxon>Yersiniaceae</taxon>
        <taxon>Yersinia</taxon>
    </lineage>
</organism>
<protein>
    <recommendedName>
        <fullName evidence="1">ATP synthase subunit c</fullName>
    </recommendedName>
    <alternativeName>
        <fullName evidence="1">ATP synthase F(0) sector subunit c</fullName>
    </alternativeName>
    <alternativeName>
        <fullName evidence="1">F-type ATPase subunit c</fullName>
        <shortName evidence="1">F-ATPase subunit c</shortName>
    </alternativeName>
    <alternativeName>
        <fullName evidence="1">Lipid-binding protein</fullName>
    </alternativeName>
</protein>
<accession>Q1C090</accession>